<gene>
    <name type="primary">EMB8</name>
</gene>
<protein>
    <recommendedName>
        <fullName>Embryogenesis-associated protein EMB8</fullName>
        <ecNumber>3.1.1.-</ecNumber>
    </recommendedName>
</protein>
<reference key="1">
    <citation type="journal article" date="1999" name="Plant Mol. Biol.">
        <title>Cloning and characterization of six embryogenesis-associated cDNAs from somatic embryos of Picea glauca and their comparative expression during zygotic embryogenesis.</title>
        <authorList>
            <person name="Dong J.-Z."/>
            <person name="Dunstan D.I."/>
        </authorList>
    </citation>
    <scope>NUCLEOTIDE SEQUENCE [GENOMIC DNA]</scope>
    <scope>DEVELOPMENTAL STAGE</scope>
</reference>
<feature type="chain" id="PRO_0000212458" description="Embryogenesis-associated protein EMB8">
    <location>
        <begin position="1"/>
        <end position="457"/>
    </location>
</feature>
<feature type="domain" description="AB hydrolase-1" evidence="2">
    <location>
        <begin position="151"/>
        <end position="391"/>
    </location>
</feature>
<feature type="region of interest" description="Disordered" evidence="3">
    <location>
        <begin position="39"/>
        <end position="59"/>
    </location>
</feature>
<feature type="region of interest" description="Disordered" evidence="3">
    <location>
        <begin position="438"/>
        <end position="457"/>
    </location>
</feature>
<feature type="compositionally biased region" description="Basic and acidic residues" evidence="3">
    <location>
        <begin position="438"/>
        <end position="447"/>
    </location>
</feature>
<feature type="compositionally biased region" description="Polar residues" evidence="3">
    <location>
        <begin position="448"/>
        <end position="457"/>
    </location>
</feature>
<feature type="active site" description="Charge relay system" evidence="1">
    <location>
        <position position="231"/>
    </location>
</feature>
<feature type="active site" description="Charge relay system" evidence="1">
    <location>
        <position position="361"/>
    </location>
</feature>
<feature type="active site" description="Charge relay system" evidence="1">
    <location>
        <position position="390"/>
    </location>
</feature>
<name>EMB8_PICGL</name>
<comment type="developmental stage">
    <text evidence="4">In somatic embryos, expressed at low levels during the first phase of maturation and is most abundant 14 days after maturation begins. Not detected in zygotic embryos.</text>
</comment>
<comment type="similarity">
    <text evidence="5">Belongs to the AB hydrolase superfamily. AB hydrolase 4 family.</text>
</comment>
<evidence type="ECO:0000250" key="1"/>
<evidence type="ECO:0000255" key="2"/>
<evidence type="ECO:0000256" key="3">
    <source>
        <dbReference type="SAM" id="MobiDB-lite"/>
    </source>
</evidence>
<evidence type="ECO:0000269" key="4">
    <source>
    </source>
</evidence>
<evidence type="ECO:0000305" key="5"/>
<dbReference type="EC" id="3.1.1.-"/>
<dbReference type="EMBL" id="L47118">
    <property type="protein sequence ID" value="AAB01571.1"/>
    <property type="molecule type" value="Genomic_DNA"/>
</dbReference>
<dbReference type="PIR" id="T09290">
    <property type="entry name" value="T09290"/>
</dbReference>
<dbReference type="ESTHER" id="picgl-emb8">
    <property type="family name" value="abh_upf0017"/>
</dbReference>
<dbReference type="GO" id="GO:0047372">
    <property type="term" value="F:monoacylglycerol lipase activity"/>
    <property type="evidence" value="ECO:0007669"/>
    <property type="project" value="TreeGrafter"/>
</dbReference>
<dbReference type="GO" id="GO:0034338">
    <property type="term" value="F:short-chain carboxylesterase activity"/>
    <property type="evidence" value="ECO:0007669"/>
    <property type="project" value="TreeGrafter"/>
</dbReference>
<dbReference type="FunFam" id="3.40.50.1820:FF:000140">
    <property type="entry name" value="Esterase/lipase/thioesterase family protein"/>
    <property type="match status" value="1"/>
</dbReference>
<dbReference type="Gene3D" id="3.40.50.1820">
    <property type="entry name" value="alpha/beta hydrolase"/>
    <property type="match status" value="1"/>
</dbReference>
<dbReference type="InterPro" id="IPR000073">
    <property type="entry name" value="AB_hydrolase_1"/>
</dbReference>
<dbReference type="InterPro" id="IPR000952">
    <property type="entry name" value="AB_hydrolase_4_CS"/>
</dbReference>
<dbReference type="InterPro" id="IPR050960">
    <property type="entry name" value="AB_hydrolase_4_sf"/>
</dbReference>
<dbReference type="InterPro" id="IPR029058">
    <property type="entry name" value="AB_hydrolase_fold"/>
</dbReference>
<dbReference type="InterPro" id="IPR012020">
    <property type="entry name" value="ABHD4"/>
</dbReference>
<dbReference type="PANTHER" id="PTHR10794">
    <property type="entry name" value="ABHYDROLASE DOMAIN-CONTAINING PROTEIN"/>
    <property type="match status" value="1"/>
</dbReference>
<dbReference type="PANTHER" id="PTHR10794:SF84">
    <property type="entry name" value="ESTERASE_LIPASE_THIOESTERASE FAMILY PROTEIN"/>
    <property type="match status" value="1"/>
</dbReference>
<dbReference type="Pfam" id="PF00561">
    <property type="entry name" value="Abhydrolase_1"/>
    <property type="match status" value="1"/>
</dbReference>
<dbReference type="PIRSF" id="PIRSF005211">
    <property type="entry name" value="Ab_hydro_YheT"/>
    <property type="match status" value="1"/>
</dbReference>
<dbReference type="SUPFAM" id="SSF53474">
    <property type="entry name" value="alpha/beta-Hydrolases"/>
    <property type="match status" value="1"/>
</dbReference>
<dbReference type="PROSITE" id="PS01133">
    <property type="entry name" value="UPF0017"/>
    <property type="match status" value="1"/>
</dbReference>
<keyword id="KW-0378">Hydrolase</keyword>
<keyword id="KW-0719">Serine esterase</keyword>
<proteinExistence type="evidence at transcript level"/>
<sequence length="457" mass="51020">MAISSRSVGMTEIHCNFPQNPFRRISRRISQFRAGFPDKKPAAGACEEQDELTSGSAARIQRRDKQLPEIIGSDRELMSKLTTLGRPYRHFPFMGNRHVETIFASFFRSWPVIKSRRECLRMEDGGTVELDWPLEGEDAELWNGELPVNSPVLILLPGLTGGSDDSYVKHMLLRARKHGWHSVVFNSRGCADSPVTTPQFYSASFTKDLCQVVKHVAVRFSESNIYAVGWSLGANILVRYLGEVAGNCPLSGAVSLCNPFNLVIADEDFHKGLGFNNVYDKALARGLRQIFPKHTRLFEGIEGEYNIPTVAKARSVRDFDGGLTRVSFGFQSVGDYYSNSSSSLSIKYVQTSLLCIQASNDPIAPSRGIPWEDIKENPNCLLVVTPNGGHLGWVAGDDAPFGAPWTDPLVMEYLEVLEKNQIEKPLRRTIDDVHTPRVDSVHTRETNNYKSPIENVN</sequence>
<organism>
    <name type="scientific">Picea glauca</name>
    <name type="common">White spruce</name>
    <name type="synonym">Pinus glauca</name>
    <dbReference type="NCBI Taxonomy" id="3330"/>
    <lineage>
        <taxon>Eukaryota</taxon>
        <taxon>Viridiplantae</taxon>
        <taxon>Streptophyta</taxon>
        <taxon>Embryophyta</taxon>
        <taxon>Tracheophyta</taxon>
        <taxon>Spermatophyta</taxon>
        <taxon>Pinopsida</taxon>
        <taxon>Pinidae</taxon>
        <taxon>Conifers I</taxon>
        <taxon>Pinales</taxon>
        <taxon>Pinaceae</taxon>
        <taxon>Picea</taxon>
    </lineage>
</organism>
<accession>Q40863</accession>